<accession>Q985W8</accession>
<reference key="1">
    <citation type="journal article" date="2000" name="DNA Res.">
        <title>Complete genome structure of the nitrogen-fixing symbiotic bacterium Mesorhizobium loti.</title>
        <authorList>
            <person name="Kaneko T."/>
            <person name="Nakamura Y."/>
            <person name="Sato S."/>
            <person name="Asamizu E."/>
            <person name="Kato T."/>
            <person name="Sasamoto S."/>
            <person name="Watanabe A."/>
            <person name="Idesawa K."/>
            <person name="Ishikawa A."/>
            <person name="Kawashima K."/>
            <person name="Kimura T."/>
            <person name="Kishida Y."/>
            <person name="Kiyokawa C."/>
            <person name="Kohara M."/>
            <person name="Matsumoto M."/>
            <person name="Matsuno A."/>
            <person name="Mochizuki Y."/>
            <person name="Nakayama S."/>
            <person name="Nakazaki N."/>
            <person name="Shimpo S."/>
            <person name="Sugimoto M."/>
            <person name="Takeuchi C."/>
            <person name="Yamada M."/>
            <person name="Tabata S."/>
        </authorList>
    </citation>
    <scope>NUCLEOTIDE SEQUENCE [LARGE SCALE GENOMIC DNA]</scope>
    <source>
        <strain>LMG 29417 / CECT 9101 / MAFF 303099</strain>
    </source>
</reference>
<dbReference type="EMBL" id="BA000012">
    <property type="protein sequence ID" value="BAB53585.1"/>
    <property type="molecule type" value="Genomic_DNA"/>
</dbReference>
<dbReference type="SMR" id="Q985W8"/>
<dbReference type="KEGG" id="mlo:mlr7495"/>
<dbReference type="eggNOG" id="COG3175">
    <property type="taxonomic scope" value="Bacteria"/>
</dbReference>
<dbReference type="HOGENOM" id="CLU_045000_5_0_5"/>
<dbReference type="Proteomes" id="UP000000552">
    <property type="component" value="Chromosome"/>
</dbReference>
<dbReference type="GO" id="GO:0005886">
    <property type="term" value="C:plasma membrane"/>
    <property type="evidence" value="ECO:0007669"/>
    <property type="project" value="UniProtKB-SubCell"/>
</dbReference>
<dbReference type="GO" id="GO:0005507">
    <property type="term" value="F:copper ion binding"/>
    <property type="evidence" value="ECO:0007669"/>
    <property type="project" value="InterPro"/>
</dbReference>
<dbReference type="GO" id="GO:0008535">
    <property type="term" value="P:respiratory chain complex IV assembly"/>
    <property type="evidence" value="ECO:0007669"/>
    <property type="project" value="UniProtKB-UniRule"/>
</dbReference>
<dbReference type="FunFam" id="2.60.370.10:FF:000001">
    <property type="entry name" value="COX11 cytochrome c oxidase assembly homolog"/>
    <property type="match status" value="1"/>
</dbReference>
<dbReference type="Gene3D" id="2.60.370.10">
    <property type="entry name" value="Ctag/Cox11"/>
    <property type="match status" value="1"/>
</dbReference>
<dbReference type="HAMAP" id="MF_00155">
    <property type="entry name" value="CtaG"/>
    <property type="match status" value="1"/>
</dbReference>
<dbReference type="InterPro" id="IPR023471">
    <property type="entry name" value="CtaG/Cox11_dom_sf"/>
</dbReference>
<dbReference type="InterPro" id="IPR007533">
    <property type="entry name" value="Cyt_c_oxidase_assmbl_CtaG"/>
</dbReference>
<dbReference type="NCBIfam" id="NF003465">
    <property type="entry name" value="PRK05089.1"/>
    <property type="match status" value="1"/>
</dbReference>
<dbReference type="PANTHER" id="PTHR21320:SF3">
    <property type="entry name" value="CYTOCHROME C OXIDASE ASSEMBLY PROTEIN COX11, MITOCHONDRIAL-RELATED"/>
    <property type="match status" value="1"/>
</dbReference>
<dbReference type="PANTHER" id="PTHR21320">
    <property type="entry name" value="CYTOCHROME C OXIDASE ASSEMBLY PROTEIN COX11-RELATED"/>
    <property type="match status" value="1"/>
</dbReference>
<dbReference type="Pfam" id="PF04442">
    <property type="entry name" value="CtaG_Cox11"/>
    <property type="match status" value="1"/>
</dbReference>
<dbReference type="PIRSF" id="PIRSF005413">
    <property type="entry name" value="COX11"/>
    <property type="match status" value="1"/>
</dbReference>
<dbReference type="SUPFAM" id="SSF110111">
    <property type="entry name" value="Ctag/Cox11"/>
    <property type="match status" value="1"/>
</dbReference>
<feature type="chain" id="PRO_0000206038" description="Cytochrome c oxidase assembly protein CtaG">
    <location>
        <begin position="1"/>
        <end position="206"/>
    </location>
</feature>
<feature type="topological domain" description="Cytoplasmic" evidence="1">
    <location>
        <begin position="1"/>
        <end position="12"/>
    </location>
</feature>
<feature type="transmembrane region" description="Helical; Signal-anchor for type II membrane protein" evidence="1">
    <location>
        <begin position="13"/>
        <end position="35"/>
    </location>
</feature>
<feature type="topological domain" description="Periplasmic" evidence="1">
    <location>
        <begin position="36"/>
        <end position="206"/>
    </location>
</feature>
<feature type="region of interest" description="Disordered" evidence="2">
    <location>
        <begin position="184"/>
        <end position="206"/>
    </location>
</feature>
<feature type="compositionally biased region" description="Polar residues" evidence="2">
    <location>
        <begin position="188"/>
        <end position="206"/>
    </location>
</feature>
<keyword id="KW-0997">Cell inner membrane</keyword>
<keyword id="KW-1003">Cell membrane</keyword>
<keyword id="KW-0186">Copper</keyword>
<keyword id="KW-0472">Membrane</keyword>
<keyword id="KW-0735">Signal-anchor</keyword>
<keyword id="KW-0812">Transmembrane</keyword>
<keyword id="KW-1133">Transmembrane helix</keyword>
<evidence type="ECO:0000255" key="1">
    <source>
        <dbReference type="HAMAP-Rule" id="MF_00155"/>
    </source>
</evidence>
<evidence type="ECO:0000256" key="2">
    <source>
        <dbReference type="SAM" id="MobiDB-lite"/>
    </source>
</evidence>
<gene>
    <name evidence="1" type="primary">ctaG</name>
    <name type="ordered locus">mlr7495</name>
</gene>
<protein>
    <recommendedName>
        <fullName evidence="1">Cytochrome c oxidase assembly protein CtaG</fullName>
    </recommendedName>
</protein>
<name>COXZ_RHILO</name>
<proteinExistence type="inferred from homology"/>
<organism>
    <name type="scientific">Mesorhizobium japonicum (strain LMG 29417 / CECT 9101 / MAFF 303099)</name>
    <name type="common">Mesorhizobium loti (strain MAFF 303099)</name>
    <dbReference type="NCBI Taxonomy" id="266835"/>
    <lineage>
        <taxon>Bacteria</taxon>
        <taxon>Pseudomonadati</taxon>
        <taxon>Pseudomonadota</taxon>
        <taxon>Alphaproteobacteria</taxon>
        <taxon>Hyphomicrobiales</taxon>
        <taxon>Phyllobacteriaceae</taxon>
        <taxon>Mesorhizobium</taxon>
    </lineage>
</organism>
<comment type="function">
    <text evidence="1">Exerts its effect at some terminal stage of cytochrome c oxidase synthesis, probably by being involved in the insertion of the copper B into subunit I.</text>
</comment>
<comment type="subcellular location">
    <subcellularLocation>
        <location evidence="1">Cell inner membrane</location>
        <topology evidence="1">Single-pass type II membrane protein</topology>
        <orientation evidence="1">Periplasmic side</orientation>
    </subcellularLocation>
</comment>
<comment type="similarity">
    <text evidence="1">Belongs to the COX11/CtaG family.</text>
</comment>
<sequence>MSKKPAGKNSNRIVAAVCLAFFTGMIGMAYAAVPLYKMFCQATGYGGTTQRVEKQYAGRVLDREITVRFDANIAGVPWEFQPVQRSMTMKIGETVQAHYQATNKFDRPVTGRATFNVQPELAGPYFNKVECFCFTDTSLKPGETVDMPVLFYVDPDIVNVPELKDVKTITLSYTMFPVEKNKPVASSEPVQGTSKIISDTEANLGG</sequence>